<evidence type="ECO:0000255" key="1">
    <source>
        <dbReference type="PROSITE-ProRule" id="PRU00037"/>
    </source>
</evidence>
<evidence type="ECO:0000255" key="2">
    <source>
        <dbReference type="PROSITE-ProRule" id="PRU00042"/>
    </source>
</evidence>
<evidence type="ECO:0000305" key="3"/>
<evidence type="ECO:0007744" key="4">
    <source>
    </source>
</evidence>
<evidence type="ECO:0007744" key="5">
    <source>
    </source>
</evidence>
<feature type="chain" id="PRO_0000047738" description="Zinc finger and BTB domain-containing protein 25">
    <location>
        <begin position="1"/>
        <end position="435"/>
    </location>
</feature>
<feature type="domain" description="BTB" evidence="1">
    <location>
        <begin position="1"/>
        <end position="107"/>
    </location>
</feature>
<feature type="zinc finger region" description="C2H2-type 1" evidence="2">
    <location>
        <begin position="238"/>
        <end position="260"/>
    </location>
</feature>
<feature type="zinc finger region" description="C2H2-type 2" evidence="2">
    <location>
        <begin position="349"/>
        <end position="371"/>
    </location>
</feature>
<feature type="cross-link" description="Glycyl lysine isopeptide (Lys-Gly) (interchain with G-Cter in SUMO2)" evidence="5">
    <location>
        <position position="142"/>
    </location>
</feature>
<feature type="cross-link" description="Glycyl lysine isopeptide (Lys-Gly) (interchain with G-Cter in SUMO2)" evidence="5">
    <location>
        <position position="148"/>
    </location>
</feature>
<feature type="cross-link" description="Glycyl lysine isopeptide (Lys-Gly) (interchain with G-Cter in SUMO2)" evidence="5">
    <location>
        <position position="198"/>
    </location>
</feature>
<feature type="cross-link" description="Glycyl lysine isopeptide (Lys-Gly) (interchain with G-Cter in SUMO2)" evidence="4 5">
    <location>
        <position position="204"/>
    </location>
</feature>
<feature type="cross-link" description="Glycyl lysine isopeptide (Lys-Gly) (interchain with G-Cter in SUMO2)" evidence="5">
    <location>
        <position position="303"/>
    </location>
</feature>
<feature type="cross-link" description="Glycyl lysine isopeptide (Lys-Gly) (interchain with G-Cter in SUMO2)" evidence="5">
    <location>
        <position position="330"/>
    </location>
</feature>
<feature type="cross-link" description="Glycyl lysine isopeptide (Lys-Gly) (interchain with G-Cter in SUMO2)" evidence="5">
    <location>
        <position position="405"/>
    </location>
</feature>
<feature type="sequence conflict" description="In Ref. 1; CAA34595." evidence="3" ref="1">
    <original>H</original>
    <variation>L</variation>
    <location>
        <position position="165"/>
    </location>
</feature>
<feature type="sequence conflict" description="In Ref. 1; CAA34595." evidence="3" ref="1">
    <location>
        <begin position="169"/>
        <end position="170"/>
    </location>
</feature>
<protein>
    <recommendedName>
        <fullName>Zinc finger and BTB domain-containing protein 25</fullName>
    </recommendedName>
    <alternativeName>
        <fullName>Zinc finger protein 46</fullName>
    </alternativeName>
    <alternativeName>
        <fullName>Zinc finger protein KUP</fullName>
    </alternativeName>
</protein>
<sequence length="435" mass="48990">MDTASHSLVLLQQLNMQREFGFLCDCTVAIGDVYFKAHRAVLAAFSNYFKMIFIHQTSECIKIQPTDIQPDIFSYLLHIMYTGKGPKQIVDHSRLEEGIRFLHADYLSHIATEMNQVFSPETVQSSNLYGIQISTTQKTVVKQGLEVKEAPSSNSGNRAAVQGDHPQLQLSLAIGLDDGTADQQRACPATQALEEHQKPPVSIKQERCDPESVISQSHPSPSSEVTGPTFTENSVKIHLCHYCGERFDSRSNLRQHLHTHVSGSLPFGVPASILESNDLGEVHPLNENSEALECRRLSSFIVKENEQQPDHTNRGTTEPLQISQVSLISKDTEPVELNCNFSFSRKRKMSCTICGHKFPRKSQLLEHMYTHKGKSYRYNRCQRFGNALAQRFQPYCDSWSDVSLKSSRLSQEHLDLPCALESELTQENVDTILVE</sequence>
<gene>
    <name type="primary">ZBTB25</name>
    <name type="synonym">C14orf51</name>
    <name type="synonym">KUP</name>
    <name type="synonym">ZNF46</name>
</gene>
<comment type="function">
    <text>May be involved in transcriptional regulation.</text>
</comment>
<comment type="interaction">
    <interactant intactId="EBI-739899">
        <id>P24278</id>
    </interactant>
    <interactant intactId="EBI-359248">
        <id>Q96GX9</id>
        <label>APIP</label>
    </interactant>
    <organismsDiffer>false</organismsDiffer>
    <experiments>3</experiments>
</comment>
<comment type="interaction">
    <interactant intactId="EBI-739899">
        <id>P24278</id>
    </interactant>
    <interactant intactId="EBI-11982645">
        <id>Q8N4Y2-3</id>
        <label>CRACR2B</label>
    </interactant>
    <organismsDiffer>false</organismsDiffer>
    <experiments>3</experiments>
</comment>
<comment type="interaction">
    <interactant intactId="EBI-739899">
        <id>P24278</id>
    </interactant>
    <interactant intactId="EBI-3867333">
        <id>A8MQ03</id>
        <label>CYSRT1</label>
    </interactant>
    <organismsDiffer>false</organismsDiffer>
    <experiments>3</experiments>
</comment>
<comment type="interaction">
    <interactant intactId="EBI-739899">
        <id>P24278</id>
    </interactant>
    <interactant intactId="EBI-10173632">
        <id>P35638-2</id>
        <label>DDIT3</label>
    </interactant>
    <organismsDiffer>false</organismsDiffer>
    <experiments>3</experiments>
</comment>
<comment type="interaction">
    <interactant intactId="EBI-739899">
        <id>P24278</id>
    </interactant>
    <interactant intactId="EBI-748664">
        <id>O75506</id>
        <label>HSBP1</label>
    </interactant>
    <organismsDiffer>false</organismsDiffer>
    <experiments>3</experiments>
</comment>
<comment type="interaction">
    <interactant intactId="EBI-739899">
        <id>P24278</id>
    </interactant>
    <interactant intactId="EBI-517086">
        <id>O43464</id>
        <label>HTRA2</label>
    </interactant>
    <organismsDiffer>false</organismsDiffer>
    <experiments>3</experiments>
</comment>
<comment type="interaction">
    <interactant intactId="EBI-739899">
        <id>P24278</id>
    </interactant>
    <interactant intactId="EBI-1055254">
        <id>Q8WXH2</id>
        <label>JPH3</label>
    </interactant>
    <organismsDiffer>false</organismsDiffer>
    <experiments>3</experiments>
</comment>
<comment type="interaction">
    <interactant intactId="EBI-739899">
        <id>P24278</id>
    </interactant>
    <interactant intactId="EBI-9027502">
        <id>Q719H9</id>
        <label>KCTD1</label>
    </interactant>
    <organismsDiffer>false</organismsDiffer>
    <experiments>3</experiments>
</comment>
<comment type="interaction">
    <interactant intactId="EBI-739899">
        <id>P24278</id>
    </interactant>
    <interactant intactId="EBI-4397613">
        <id>Q7L273</id>
        <label>KCTD9</label>
    </interactant>
    <organismsDiffer>false</organismsDiffer>
    <experiments>3</experiments>
</comment>
<comment type="interaction">
    <interactant intactId="EBI-739899">
        <id>P24278</id>
    </interactant>
    <interactant intactId="EBI-10171774">
        <id>P60410</id>
        <label>KRTAP10-8</label>
    </interactant>
    <organismsDiffer>false</organismsDiffer>
    <experiments>3</experiments>
</comment>
<comment type="interaction">
    <interactant intactId="EBI-739899">
        <id>P24278</id>
    </interactant>
    <interactant intactId="EBI-11988175">
        <id>Q9BYP8</id>
        <label>KRTAP17-1</label>
    </interactant>
    <organismsDiffer>false</organismsDiffer>
    <experiments>3</experiments>
</comment>
<comment type="interaction">
    <interactant intactId="EBI-739899">
        <id>P24278</id>
    </interactant>
    <interactant intactId="EBI-741037">
        <id>Q9BRK4</id>
        <label>LZTS2</label>
    </interactant>
    <organismsDiffer>false</organismsDiffer>
    <experiments>3</experiments>
</comment>
<comment type="interaction">
    <interactant intactId="EBI-739899">
        <id>P24278</id>
    </interactant>
    <interactant intactId="EBI-724076">
        <id>Q99750</id>
        <label>MDFI</label>
    </interactant>
    <organismsDiffer>false</organismsDiffer>
    <experiments>2</experiments>
</comment>
<comment type="interaction">
    <interactant intactId="EBI-739899">
        <id>P24278</id>
    </interactant>
    <interactant intactId="EBI-10171633">
        <id>Q96PV4</id>
        <label>PNMA5</label>
    </interactant>
    <organismsDiffer>false</organismsDiffer>
    <experiments>4</experiments>
</comment>
<comment type="interaction">
    <interactant intactId="EBI-739899">
        <id>P24278</id>
    </interactant>
    <interactant intactId="EBI-714091">
        <id>P49903</id>
        <label>SEPHS1</label>
    </interactant>
    <organismsDiffer>false</organismsDiffer>
    <experiments>7</experiments>
</comment>
<comment type="interaction">
    <interactant intactId="EBI-739899">
        <id>P24278</id>
    </interactant>
    <interactant intactId="EBI-5235340">
        <id>Q7Z699</id>
        <label>SPRED1</label>
    </interactant>
    <organismsDiffer>false</organismsDiffer>
    <experiments>3</experiments>
</comment>
<comment type="interaction">
    <interactant intactId="EBI-739899">
        <id>P24278</id>
    </interactant>
    <interactant intactId="EBI-372899">
        <id>Q13148</id>
        <label>TARDBP</label>
    </interactant>
    <organismsDiffer>false</organismsDiffer>
    <experiments>3</experiments>
</comment>
<comment type="interaction">
    <interactant intactId="EBI-739899">
        <id>P24278</id>
    </interactant>
    <interactant intactId="EBI-742381">
        <id>Q92609</id>
        <label>TBC1D5</label>
    </interactant>
    <organismsDiffer>false</organismsDiffer>
    <experiments>3</experiments>
</comment>
<comment type="interaction">
    <interactant intactId="EBI-739899">
        <id>P24278</id>
    </interactant>
    <interactant intactId="EBI-357849">
        <id>Q15025</id>
        <label>TNIP1</label>
    </interactant>
    <organismsDiffer>false</organismsDiffer>
    <experiments>6</experiments>
</comment>
<comment type="interaction">
    <interactant intactId="EBI-739899">
        <id>P24278</id>
    </interactant>
    <interactant intactId="EBI-355744">
        <id>Q12933</id>
        <label>TRAF2</label>
    </interactant>
    <organismsDiffer>false</organismsDiffer>
    <experiments>4</experiments>
</comment>
<comment type="interaction">
    <interactant intactId="EBI-739899">
        <id>P24278</id>
    </interactant>
    <interactant intactId="EBI-359276">
        <id>Q9Y4K3</id>
        <label>TRAF6</label>
    </interactant>
    <organismsDiffer>false</organismsDiffer>
    <experiments>3</experiments>
</comment>
<comment type="interaction">
    <interactant intactId="EBI-739899">
        <id>P24278</id>
    </interactant>
    <interactant intactId="EBI-3918381">
        <id>Q96PN8</id>
        <label>TSSK3</label>
    </interactant>
    <organismsDiffer>false</organismsDiffer>
    <experiments>3</experiments>
</comment>
<comment type="interaction">
    <interactant intactId="EBI-739899">
        <id>P24278</id>
    </interactant>
    <interactant intactId="EBI-355164">
        <id>P55072</id>
        <label>VCP</label>
    </interactant>
    <organismsDiffer>false</organismsDiffer>
    <experiments>3</experiments>
</comment>
<comment type="interaction">
    <interactant intactId="EBI-739899">
        <id>P24278</id>
    </interactant>
    <interactant intactId="EBI-2803134">
        <id>Q2NL98</id>
        <label>VMAC</label>
    </interactant>
    <organismsDiffer>false</organismsDiffer>
    <experiments>3</experiments>
</comment>
<comment type="interaction">
    <interactant intactId="EBI-739899">
        <id>P24278</id>
    </interactant>
    <interactant intactId="EBI-2682961">
        <id>Q9Y2K1</id>
        <label>ZBTB1</label>
    </interactant>
    <organismsDiffer>false</organismsDiffer>
    <experiments>4</experiments>
</comment>
<comment type="interaction">
    <interactant intactId="EBI-739899">
        <id>P24278</id>
    </interactant>
    <interactant intactId="EBI-2515601">
        <id>Q8N680</id>
        <label>ZBTB2</label>
    </interactant>
    <organismsDiffer>false</organismsDiffer>
    <experiments>5</experiments>
</comment>
<comment type="subcellular location">
    <subcellularLocation>
        <location>Nucleus</location>
    </subcellularLocation>
</comment>
<comment type="tissue specificity">
    <text>Expressed mainly in hematopoietic cells and testis.</text>
</comment>
<organism>
    <name type="scientific">Homo sapiens</name>
    <name type="common">Human</name>
    <dbReference type="NCBI Taxonomy" id="9606"/>
    <lineage>
        <taxon>Eukaryota</taxon>
        <taxon>Metazoa</taxon>
        <taxon>Chordata</taxon>
        <taxon>Craniata</taxon>
        <taxon>Vertebrata</taxon>
        <taxon>Euteleostomi</taxon>
        <taxon>Mammalia</taxon>
        <taxon>Eutheria</taxon>
        <taxon>Euarchontoglires</taxon>
        <taxon>Primates</taxon>
        <taxon>Haplorrhini</taxon>
        <taxon>Catarrhini</taxon>
        <taxon>Hominidae</taxon>
        <taxon>Homo</taxon>
    </lineage>
</organism>
<keyword id="KW-0238">DNA-binding</keyword>
<keyword id="KW-1017">Isopeptide bond</keyword>
<keyword id="KW-0479">Metal-binding</keyword>
<keyword id="KW-0539">Nucleus</keyword>
<keyword id="KW-1267">Proteomics identification</keyword>
<keyword id="KW-1185">Reference proteome</keyword>
<keyword id="KW-0677">Repeat</keyword>
<keyword id="KW-0804">Transcription</keyword>
<keyword id="KW-0805">Transcription regulation</keyword>
<keyword id="KW-0832">Ubl conjugation</keyword>
<keyword id="KW-0862">Zinc</keyword>
<keyword id="KW-0863">Zinc-finger</keyword>
<proteinExistence type="evidence at protein level"/>
<accession>P24278</accession>
<accession>B3KUX6</accession>
<accession>Q8IYH9</accession>
<reference key="1">
    <citation type="journal article" date="1991" name="Nucleic Acids Res.">
        <title>The KUP gene, located on human chromosome 14, encodes a protein with two distant zinc fingers.</title>
        <authorList>
            <person name="Chardin P."/>
            <person name="Courtois G."/>
            <person name="Mattei M.-G."/>
            <person name="Gisselbrecht S."/>
        </authorList>
    </citation>
    <scope>NUCLEOTIDE SEQUENCE [MRNA]</scope>
</reference>
<reference key="2">
    <citation type="journal article" date="2004" name="Nat. Genet.">
        <title>Complete sequencing and characterization of 21,243 full-length human cDNAs.</title>
        <authorList>
            <person name="Ota T."/>
            <person name="Suzuki Y."/>
            <person name="Nishikawa T."/>
            <person name="Otsuki T."/>
            <person name="Sugiyama T."/>
            <person name="Irie R."/>
            <person name="Wakamatsu A."/>
            <person name="Hayashi K."/>
            <person name="Sato H."/>
            <person name="Nagai K."/>
            <person name="Kimura K."/>
            <person name="Makita H."/>
            <person name="Sekine M."/>
            <person name="Obayashi M."/>
            <person name="Nishi T."/>
            <person name="Shibahara T."/>
            <person name="Tanaka T."/>
            <person name="Ishii S."/>
            <person name="Yamamoto J."/>
            <person name="Saito K."/>
            <person name="Kawai Y."/>
            <person name="Isono Y."/>
            <person name="Nakamura Y."/>
            <person name="Nagahari K."/>
            <person name="Murakami K."/>
            <person name="Yasuda T."/>
            <person name="Iwayanagi T."/>
            <person name="Wagatsuma M."/>
            <person name="Shiratori A."/>
            <person name="Sudo H."/>
            <person name="Hosoiri T."/>
            <person name="Kaku Y."/>
            <person name="Kodaira H."/>
            <person name="Kondo H."/>
            <person name="Sugawara M."/>
            <person name="Takahashi M."/>
            <person name="Kanda K."/>
            <person name="Yokoi T."/>
            <person name="Furuya T."/>
            <person name="Kikkawa E."/>
            <person name="Omura Y."/>
            <person name="Abe K."/>
            <person name="Kamihara K."/>
            <person name="Katsuta N."/>
            <person name="Sato K."/>
            <person name="Tanikawa M."/>
            <person name="Yamazaki M."/>
            <person name="Ninomiya K."/>
            <person name="Ishibashi T."/>
            <person name="Yamashita H."/>
            <person name="Murakawa K."/>
            <person name="Fujimori K."/>
            <person name="Tanai H."/>
            <person name="Kimata M."/>
            <person name="Watanabe M."/>
            <person name="Hiraoka S."/>
            <person name="Chiba Y."/>
            <person name="Ishida S."/>
            <person name="Ono Y."/>
            <person name="Takiguchi S."/>
            <person name="Watanabe S."/>
            <person name="Yosida M."/>
            <person name="Hotuta T."/>
            <person name="Kusano J."/>
            <person name="Kanehori K."/>
            <person name="Takahashi-Fujii A."/>
            <person name="Hara H."/>
            <person name="Tanase T.-O."/>
            <person name="Nomura Y."/>
            <person name="Togiya S."/>
            <person name="Komai F."/>
            <person name="Hara R."/>
            <person name="Takeuchi K."/>
            <person name="Arita M."/>
            <person name="Imose N."/>
            <person name="Musashino K."/>
            <person name="Yuuki H."/>
            <person name="Oshima A."/>
            <person name="Sasaki N."/>
            <person name="Aotsuka S."/>
            <person name="Yoshikawa Y."/>
            <person name="Matsunawa H."/>
            <person name="Ichihara T."/>
            <person name="Shiohata N."/>
            <person name="Sano S."/>
            <person name="Moriya S."/>
            <person name="Momiyama H."/>
            <person name="Satoh N."/>
            <person name="Takami S."/>
            <person name="Terashima Y."/>
            <person name="Suzuki O."/>
            <person name="Nakagawa S."/>
            <person name="Senoh A."/>
            <person name="Mizoguchi H."/>
            <person name="Goto Y."/>
            <person name="Shimizu F."/>
            <person name="Wakebe H."/>
            <person name="Hishigaki H."/>
            <person name="Watanabe T."/>
            <person name="Sugiyama A."/>
            <person name="Takemoto M."/>
            <person name="Kawakami B."/>
            <person name="Yamazaki M."/>
            <person name="Watanabe K."/>
            <person name="Kumagai A."/>
            <person name="Itakura S."/>
            <person name="Fukuzumi Y."/>
            <person name="Fujimori Y."/>
            <person name="Komiyama M."/>
            <person name="Tashiro H."/>
            <person name="Tanigami A."/>
            <person name="Fujiwara T."/>
            <person name="Ono T."/>
            <person name="Yamada K."/>
            <person name="Fujii Y."/>
            <person name="Ozaki K."/>
            <person name="Hirao M."/>
            <person name="Ohmori Y."/>
            <person name="Kawabata A."/>
            <person name="Hikiji T."/>
            <person name="Kobatake N."/>
            <person name="Inagaki H."/>
            <person name="Ikema Y."/>
            <person name="Okamoto S."/>
            <person name="Okitani R."/>
            <person name="Kawakami T."/>
            <person name="Noguchi S."/>
            <person name="Itoh T."/>
            <person name="Shigeta K."/>
            <person name="Senba T."/>
            <person name="Matsumura K."/>
            <person name="Nakajima Y."/>
            <person name="Mizuno T."/>
            <person name="Morinaga M."/>
            <person name="Sasaki M."/>
            <person name="Togashi T."/>
            <person name="Oyama M."/>
            <person name="Hata H."/>
            <person name="Watanabe M."/>
            <person name="Komatsu T."/>
            <person name="Mizushima-Sugano J."/>
            <person name="Satoh T."/>
            <person name="Shirai Y."/>
            <person name="Takahashi Y."/>
            <person name="Nakagawa K."/>
            <person name="Okumura K."/>
            <person name="Nagase T."/>
            <person name="Nomura N."/>
            <person name="Kikuchi H."/>
            <person name="Masuho Y."/>
            <person name="Yamashita R."/>
            <person name="Nakai K."/>
            <person name="Yada T."/>
            <person name="Nakamura Y."/>
            <person name="Ohara O."/>
            <person name="Isogai T."/>
            <person name="Sugano S."/>
        </authorList>
    </citation>
    <scope>NUCLEOTIDE SEQUENCE [LARGE SCALE MRNA]</scope>
    <source>
        <tissue>Trachea</tissue>
    </source>
</reference>
<reference key="3">
    <citation type="submission" date="2005-07" db="EMBL/GenBank/DDBJ databases">
        <authorList>
            <person name="Mural R.J."/>
            <person name="Istrail S."/>
            <person name="Sutton G.G."/>
            <person name="Florea L."/>
            <person name="Halpern A.L."/>
            <person name="Mobarry C.M."/>
            <person name="Lippert R."/>
            <person name="Walenz B."/>
            <person name="Shatkay H."/>
            <person name="Dew I."/>
            <person name="Miller J.R."/>
            <person name="Flanigan M.J."/>
            <person name="Edwards N.J."/>
            <person name="Bolanos R."/>
            <person name="Fasulo D."/>
            <person name="Halldorsson B.V."/>
            <person name="Hannenhalli S."/>
            <person name="Turner R."/>
            <person name="Yooseph S."/>
            <person name="Lu F."/>
            <person name="Nusskern D.R."/>
            <person name="Shue B.C."/>
            <person name="Zheng X.H."/>
            <person name="Zhong F."/>
            <person name="Delcher A.L."/>
            <person name="Huson D.H."/>
            <person name="Kravitz S.A."/>
            <person name="Mouchard L."/>
            <person name="Reinert K."/>
            <person name="Remington K.A."/>
            <person name="Clark A.G."/>
            <person name="Waterman M.S."/>
            <person name="Eichler E.E."/>
            <person name="Adams M.D."/>
            <person name="Hunkapiller M.W."/>
            <person name="Myers E.W."/>
            <person name="Venter J.C."/>
        </authorList>
    </citation>
    <scope>NUCLEOTIDE SEQUENCE [LARGE SCALE GENOMIC DNA]</scope>
</reference>
<reference key="4">
    <citation type="journal article" date="2004" name="Genome Res.">
        <title>The status, quality, and expansion of the NIH full-length cDNA project: the Mammalian Gene Collection (MGC).</title>
        <authorList>
            <consortium name="The MGC Project Team"/>
        </authorList>
    </citation>
    <scope>NUCLEOTIDE SEQUENCE [LARGE SCALE MRNA]</scope>
    <source>
        <tissue>Blood</tissue>
    </source>
</reference>
<reference key="5">
    <citation type="journal article" date="2015" name="Mol. Cell. Proteomics">
        <title>System-wide analysis of SUMOylation dynamics in response to replication stress reveals novel small ubiquitin-like modified target proteins and acceptor lysines relevant for genome stability.</title>
        <authorList>
            <person name="Xiao Z."/>
            <person name="Chang J.G."/>
            <person name="Hendriks I.A."/>
            <person name="Sigurdsson J.O."/>
            <person name="Olsen J.V."/>
            <person name="Vertegaal A.C."/>
        </authorList>
    </citation>
    <scope>SUMOYLATION [LARGE SCALE ANALYSIS] AT LYS-204</scope>
    <scope>IDENTIFICATION BY MASS SPECTROMETRY [LARGE SCALE ANALYSIS]</scope>
</reference>
<reference key="6">
    <citation type="journal article" date="2017" name="Nat. Struct. Mol. Biol.">
        <title>Site-specific mapping of the human SUMO proteome reveals co-modification with phosphorylation.</title>
        <authorList>
            <person name="Hendriks I.A."/>
            <person name="Lyon D."/>
            <person name="Young C."/>
            <person name="Jensen L.J."/>
            <person name="Vertegaal A.C."/>
            <person name="Nielsen M.L."/>
        </authorList>
    </citation>
    <scope>SUMOYLATION [LARGE SCALE ANALYSIS] AT LYS-142; LYS-148; LYS-198; LYS-204; LYS-303; LYS-330 AND LYS-405</scope>
    <scope>IDENTIFICATION BY MASS SPECTROMETRY [LARGE SCALE ANALYSIS]</scope>
</reference>
<name>ZBT25_HUMAN</name>
<dbReference type="EMBL" id="X16576">
    <property type="protein sequence ID" value="CAA34595.1"/>
    <property type="molecule type" value="mRNA"/>
</dbReference>
<dbReference type="EMBL" id="AK098181">
    <property type="protein sequence ID" value="BAG53588.1"/>
    <property type="molecule type" value="mRNA"/>
</dbReference>
<dbReference type="EMBL" id="CH471061">
    <property type="protein sequence ID" value="EAW80861.1"/>
    <property type="molecule type" value="Genomic_DNA"/>
</dbReference>
<dbReference type="EMBL" id="BC035804">
    <property type="protein sequence ID" value="AAH35804.1"/>
    <property type="molecule type" value="mRNA"/>
</dbReference>
<dbReference type="CCDS" id="CCDS9765.1"/>
<dbReference type="PIR" id="S15647">
    <property type="entry name" value="S15647"/>
</dbReference>
<dbReference type="RefSeq" id="NP_001291436.1">
    <property type="nucleotide sequence ID" value="NM_001304507.1"/>
</dbReference>
<dbReference type="RefSeq" id="NP_001341613.1">
    <property type="nucleotide sequence ID" value="NM_001354684.2"/>
</dbReference>
<dbReference type="RefSeq" id="NP_001341614.1">
    <property type="nucleotide sequence ID" value="NM_001354685.2"/>
</dbReference>
<dbReference type="RefSeq" id="NP_001341615.1">
    <property type="nucleotide sequence ID" value="NM_001354686.2"/>
</dbReference>
<dbReference type="RefSeq" id="NP_001341616.1">
    <property type="nucleotide sequence ID" value="NM_001354687.2"/>
</dbReference>
<dbReference type="RefSeq" id="NP_008908.2">
    <property type="nucleotide sequence ID" value="NM_006977.3"/>
</dbReference>
<dbReference type="RefSeq" id="XP_006720314.1">
    <property type="nucleotide sequence ID" value="XM_006720251.3"/>
</dbReference>
<dbReference type="RefSeq" id="XP_006720315.1">
    <property type="nucleotide sequence ID" value="XM_006720252.3"/>
</dbReference>
<dbReference type="RefSeq" id="XP_011535445.1">
    <property type="nucleotide sequence ID" value="XM_011537143.2"/>
</dbReference>
<dbReference type="RefSeq" id="XP_016877121.1">
    <property type="nucleotide sequence ID" value="XM_017021632.1"/>
</dbReference>
<dbReference type="RefSeq" id="XP_016877122.1">
    <property type="nucleotide sequence ID" value="XM_017021633.1"/>
</dbReference>
<dbReference type="RefSeq" id="XP_016877123.1">
    <property type="nucleotide sequence ID" value="XM_017021634.1"/>
</dbReference>
<dbReference type="RefSeq" id="XP_016877124.1">
    <property type="nucleotide sequence ID" value="XM_017021635.1"/>
</dbReference>
<dbReference type="SMR" id="P24278"/>
<dbReference type="BioGRID" id="113422">
    <property type="interactions" value="65"/>
</dbReference>
<dbReference type="FunCoup" id="P24278">
    <property type="interactions" value="1455"/>
</dbReference>
<dbReference type="IntAct" id="P24278">
    <property type="interactions" value="50"/>
</dbReference>
<dbReference type="MINT" id="P24278"/>
<dbReference type="STRING" id="9606.ENSP00000476746"/>
<dbReference type="MoonDB" id="P24278">
    <property type="type" value="Predicted"/>
</dbReference>
<dbReference type="iPTMnet" id="P24278"/>
<dbReference type="PhosphoSitePlus" id="P24278"/>
<dbReference type="BioMuta" id="ZBTB25"/>
<dbReference type="DMDM" id="116242849"/>
<dbReference type="jPOST" id="P24278"/>
<dbReference type="MassIVE" id="P24278"/>
<dbReference type="PaxDb" id="9606-ENSP00000476746"/>
<dbReference type="PeptideAtlas" id="P24278"/>
<dbReference type="ProteomicsDB" id="54193"/>
<dbReference type="Antibodypedia" id="11914">
    <property type="antibodies" value="198 antibodies from 24 providers"/>
</dbReference>
<dbReference type="DNASU" id="7597"/>
<dbReference type="Ensembl" id="ENST00000394715.1">
    <property type="protein sequence ID" value="ENSP00000378204.1"/>
    <property type="gene ID" value="ENSG00000089775.12"/>
</dbReference>
<dbReference type="Ensembl" id="ENST00000608382.6">
    <property type="protein sequence ID" value="ENSP00000476746.1"/>
    <property type="gene ID" value="ENSG00000089775.12"/>
</dbReference>
<dbReference type="GeneID" id="7597"/>
<dbReference type="KEGG" id="hsa:7597"/>
<dbReference type="MANE-Select" id="ENST00000608382.6">
    <property type="protein sequence ID" value="ENSP00000476746.1"/>
    <property type="RefSeq nucleotide sequence ID" value="NM_006977.5"/>
    <property type="RefSeq protein sequence ID" value="NP_008908.2"/>
</dbReference>
<dbReference type="UCSC" id="uc001xhf.4">
    <property type="organism name" value="human"/>
</dbReference>
<dbReference type="AGR" id="HGNC:13112"/>
<dbReference type="CTD" id="7597"/>
<dbReference type="DisGeNET" id="7597"/>
<dbReference type="GeneCards" id="ZBTB25"/>
<dbReference type="HGNC" id="HGNC:13112">
    <property type="gene designation" value="ZBTB25"/>
</dbReference>
<dbReference type="HPA" id="ENSG00000089775">
    <property type="expression patterns" value="Low tissue specificity"/>
</dbReference>
<dbReference type="MIM" id="194541">
    <property type="type" value="gene"/>
</dbReference>
<dbReference type="neXtProt" id="NX_P24278"/>
<dbReference type="OpenTargets" id="ENSG00000089775"/>
<dbReference type="PharmGKB" id="PA37687"/>
<dbReference type="VEuPathDB" id="HostDB:ENSG00000089775"/>
<dbReference type="eggNOG" id="KOG1721">
    <property type="taxonomic scope" value="Eukaryota"/>
</dbReference>
<dbReference type="GeneTree" id="ENSGT00940000159887"/>
<dbReference type="HOGENOM" id="CLU_025271_0_0_1"/>
<dbReference type="InParanoid" id="P24278"/>
<dbReference type="OMA" id="YCDNWSD"/>
<dbReference type="OrthoDB" id="10261408at2759"/>
<dbReference type="PAN-GO" id="P24278">
    <property type="GO annotations" value="4 GO annotations based on evolutionary models"/>
</dbReference>
<dbReference type="PhylomeDB" id="P24278"/>
<dbReference type="TreeFam" id="TF332229"/>
<dbReference type="PathwayCommons" id="P24278"/>
<dbReference type="SignaLink" id="P24278"/>
<dbReference type="BioGRID-ORCS" id="7597">
    <property type="hits" value="14 hits in 1219 CRISPR screens"/>
</dbReference>
<dbReference type="ChiTaRS" id="ZBTB25">
    <property type="organism name" value="human"/>
</dbReference>
<dbReference type="GenomeRNAi" id="7597"/>
<dbReference type="Pharos" id="P24278">
    <property type="development level" value="Tbio"/>
</dbReference>
<dbReference type="PRO" id="PR:P24278"/>
<dbReference type="Proteomes" id="UP000005640">
    <property type="component" value="Chromosome 14"/>
</dbReference>
<dbReference type="RNAct" id="P24278">
    <property type="molecule type" value="protein"/>
</dbReference>
<dbReference type="Bgee" id="ENSG00000089775">
    <property type="expression patterns" value="Expressed in apex of heart and 115 other cell types or tissues"/>
</dbReference>
<dbReference type="ExpressionAtlas" id="P24278">
    <property type="expression patterns" value="baseline and differential"/>
</dbReference>
<dbReference type="GO" id="GO:0005654">
    <property type="term" value="C:nucleoplasm"/>
    <property type="evidence" value="ECO:0000314"/>
    <property type="project" value="HPA"/>
</dbReference>
<dbReference type="GO" id="GO:0003700">
    <property type="term" value="F:DNA-binding transcription factor activity"/>
    <property type="evidence" value="ECO:0000304"/>
    <property type="project" value="ProtInc"/>
</dbReference>
<dbReference type="GO" id="GO:0001227">
    <property type="term" value="F:DNA-binding transcription repressor activity, RNA polymerase II-specific"/>
    <property type="evidence" value="ECO:0000318"/>
    <property type="project" value="GO_Central"/>
</dbReference>
<dbReference type="GO" id="GO:0000978">
    <property type="term" value="F:RNA polymerase II cis-regulatory region sequence-specific DNA binding"/>
    <property type="evidence" value="ECO:0000318"/>
    <property type="project" value="GO_Central"/>
</dbReference>
<dbReference type="GO" id="GO:0008270">
    <property type="term" value="F:zinc ion binding"/>
    <property type="evidence" value="ECO:0007669"/>
    <property type="project" value="UniProtKB-KW"/>
</dbReference>
<dbReference type="GO" id="GO:0000122">
    <property type="term" value="P:negative regulation of transcription by RNA polymerase II"/>
    <property type="evidence" value="ECO:0000318"/>
    <property type="project" value="GO_Central"/>
</dbReference>
<dbReference type="GO" id="GO:0001817">
    <property type="term" value="P:regulation of cytokine production"/>
    <property type="evidence" value="ECO:0000318"/>
    <property type="project" value="GO_Central"/>
</dbReference>
<dbReference type="GO" id="GO:0002682">
    <property type="term" value="P:regulation of immune system process"/>
    <property type="evidence" value="ECO:0000318"/>
    <property type="project" value="GO_Central"/>
</dbReference>
<dbReference type="CDD" id="cd18213">
    <property type="entry name" value="BTB_POZ_ZBTB25_ZNF46_KUP"/>
    <property type="match status" value="1"/>
</dbReference>
<dbReference type="FunFam" id="3.30.710.10:FF:000075">
    <property type="entry name" value="zinc finger and BTB domain-containing protein 25"/>
    <property type="match status" value="1"/>
</dbReference>
<dbReference type="Gene3D" id="3.30.160.60">
    <property type="entry name" value="Classic Zinc Finger"/>
    <property type="match status" value="2"/>
</dbReference>
<dbReference type="Gene3D" id="3.30.710.10">
    <property type="entry name" value="Potassium Channel Kv1.1, Chain A"/>
    <property type="match status" value="1"/>
</dbReference>
<dbReference type="InterPro" id="IPR000210">
    <property type="entry name" value="BTB/POZ_dom"/>
</dbReference>
<dbReference type="InterPro" id="IPR011333">
    <property type="entry name" value="SKP1/BTB/POZ_sf"/>
</dbReference>
<dbReference type="InterPro" id="IPR036236">
    <property type="entry name" value="Znf_C2H2_sf"/>
</dbReference>
<dbReference type="InterPro" id="IPR013087">
    <property type="entry name" value="Znf_C2H2_type"/>
</dbReference>
<dbReference type="PANTHER" id="PTHR24394:SF51">
    <property type="entry name" value="ZINC FINGER AND BTB DOMAIN-CONTAINING 25"/>
    <property type="match status" value="1"/>
</dbReference>
<dbReference type="PANTHER" id="PTHR24394">
    <property type="entry name" value="ZINC FINGER PROTEIN"/>
    <property type="match status" value="1"/>
</dbReference>
<dbReference type="Pfam" id="PF00651">
    <property type="entry name" value="BTB"/>
    <property type="match status" value="1"/>
</dbReference>
<dbReference type="Pfam" id="PF00096">
    <property type="entry name" value="zf-C2H2"/>
    <property type="match status" value="2"/>
</dbReference>
<dbReference type="SMART" id="SM00225">
    <property type="entry name" value="BTB"/>
    <property type="match status" value="1"/>
</dbReference>
<dbReference type="SMART" id="SM00355">
    <property type="entry name" value="ZnF_C2H2"/>
    <property type="match status" value="2"/>
</dbReference>
<dbReference type="SUPFAM" id="SSF57667">
    <property type="entry name" value="beta-beta-alpha zinc fingers"/>
    <property type="match status" value="1"/>
</dbReference>
<dbReference type="SUPFAM" id="SSF54695">
    <property type="entry name" value="POZ domain"/>
    <property type="match status" value="1"/>
</dbReference>
<dbReference type="PROSITE" id="PS50097">
    <property type="entry name" value="BTB"/>
    <property type="match status" value="1"/>
</dbReference>
<dbReference type="PROSITE" id="PS00028">
    <property type="entry name" value="ZINC_FINGER_C2H2_1"/>
    <property type="match status" value="2"/>
</dbReference>
<dbReference type="PROSITE" id="PS50157">
    <property type="entry name" value="ZINC_FINGER_C2H2_2"/>
    <property type="match status" value="2"/>
</dbReference>